<proteinExistence type="inferred from homology"/>
<name>Y2251_LISIN</name>
<feature type="chain" id="PRO_0000157425" description="UPF0324 membrane protein lin2251">
    <location>
        <begin position="1"/>
        <end position="335"/>
    </location>
</feature>
<feature type="transmembrane region" description="Helical" evidence="1">
    <location>
        <begin position="10"/>
        <end position="28"/>
    </location>
</feature>
<feature type="transmembrane region" description="Helical" evidence="1">
    <location>
        <begin position="33"/>
        <end position="55"/>
    </location>
</feature>
<feature type="transmembrane region" description="Helical" evidence="1">
    <location>
        <begin position="91"/>
        <end position="113"/>
    </location>
</feature>
<feature type="transmembrane region" description="Helical" evidence="1">
    <location>
        <begin position="123"/>
        <end position="142"/>
    </location>
</feature>
<feature type="transmembrane region" description="Helical" evidence="1">
    <location>
        <begin position="155"/>
        <end position="177"/>
    </location>
</feature>
<feature type="transmembrane region" description="Helical" evidence="1">
    <location>
        <begin position="251"/>
        <end position="270"/>
    </location>
</feature>
<feature type="transmembrane region" description="Helical" evidence="1">
    <location>
        <begin position="277"/>
        <end position="299"/>
    </location>
</feature>
<feature type="transmembrane region" description="Helical" evidence="1">
    <location>
        <begin position="309"/>
        <end position="331"/>
    </location>
</feature>
<reference key="1">
    <citation type="journal article" date="2001" name="Science">
        <title>Comparative genomics of Listeria species.</title>
        <authorList>
            <person name="Glaser P."/>
            <person name="Frangeul L."/>
            <person name="Buchrieser C."/>
            <person name="Rusniok C."/>
            <person name="Amend A."/>
            <person name="Baquero F."/>
            <person name="Berche P."/>
            <person name="Bloecker H."/>
            <person name="Brandt P."/>
            <person name="Chakraborty T."/>
            <person name="Charbit A."/>
            <person name="Chetouani F."/>
            <person name="Couve E."/>
            <person name="de Daruvar A."/>
            <person name="Dehoux P."/>
            <person name="Domann E."/>
            <person name="Dominguez-Bernal G."/>
            <person name="Duchaud E."/>
            <person name="Durant L."/>
            <person name="Dussurget O."/>
            <person name="Entian K.-D."/>
            <person name="Fsihi H."/>
            <person name="Garcia-del Portillo F."/>
            <person name="Garrido P."/>
            <person name="Gautier L."/>
            <person name="Goebel W."/>
            <person name="Gomez-Lopez N."/>
            <person name="Hain T."/>
            <person name="Hauf J."/>
            <person name="Jackson D."/>
            <person name="Jones L.-M."/>
            <person name="Kaerst U."/>
            <person name="Kreft J."/>
            <person name="Kuhn M."/>
            <person name="Kunst F."/>
            <person name="Kurapkat G."/>
            <person name="Madueno E."/>
            <person name="Maitournam A."/>
            <person name="Mata Vicente J."/>
            <person name="Ng E."/>
            <person name="Nedjari H."/>
            <person name="Nordsiek G."/>
            <person name="Novella S."/>
            <person name="de Pablos B."/>
            <person name="Perez-Diaz J.-C."/>
            <person name="Purcell R."/>
            <person name="Remmel B."/>
            <person name="Rose M."/>
            <person name="Schlueter T."/>
            <person name="Simoes N."/>
            <person name="Tierrez A."/>
            <person name="Vazquez-Boland J.-A."/>
            <person name="Voss H."/>
            <person name="Wehland J."/>
            <person name="Cossart P."/>
        </authorList>
    </citation>
    <scope>NUCLEOTIDE SEQUENCE [LARGE SCALE GENOMIC DNA]</scope>
    <source>
        <strain>ATCC BAA-680 / CLIP 11262</strain>
    </source>
</reference>
<evidence type="ECO:0000255" key="1"/>
<evidence type="ECO:0000305" key="2"/>
<keyword id="KW-1003">Cell membrane</keyword>
<keyword id="KW-0472">Membrane</keyword>
<keyword id="KW-0812">Transmembrane</keyword>
<keyword id="KW-1133">Transmembrane helix</keyword>
<protein>
    <recommendedName>
        <fullName>UPF0324 membrane protein lin2251</fullName>
    </recommendedName>
</protein>
<comment type="subcellular location">
    <subcellularLocation>
        <location evidence="2">Cell membrane</location>
        <topology evidence="2">Multi-pass membrane protein</topology>
    </subcellularLocation>
</comment>
<comment type="similarity">
    <text evidence="2">Belongs to the UPF0324 family.</text>
</comment>
<organism>
    <name type="scientific">Listeria innocua serovar 6a (strain ATCC BAA-680 / CLIP 11262)</name>
    <dbReference type="NCBI Taxonomy" id="272626"/>
    <lineage>
        <taxon>Bacteria</taxon>
        <taxon>Bacillati</taxon>
        <taxon>Bacillota</taxon>
        <taxon>Bacilli</taxon>
        <taxon>Bacillales</taxon>
        <taxon>Listeriaceae</taxon>
        <taxon>Listeria</taxon>
    </lineage>
</organism>
<dbReference type="EMBL" id="AL596171">
    <property type="protein sequence ID" value="CAC97479.1"/>
    <property type="molecule type" value="Genomic_DNA"/>
</dbReference>
<dbReference type="PIR" id="AG1713">
    <property type="entry name" value="AG1713"/>
</dbReference>
<dbReference type="RefSeq" id="WP_003724569.1">
    <property type="nucleotide sequence ID" value="NC_003212.1"/>
</dbReference>
<dbReference type="STRING" id="272626.gene:17566613"/>
<dbReference type="KEGG" id="lin:lin2251"/>
<dbReference type="eggNOG" id="COG2855">
    <property type="taxonomic scope" value="Bacteria"/>
</dbReference>
<dbReference type="HOGENOM" id="CLU_033541_0_1_9"/>
<dbReference type="OrthoDB" id="9811391at2"/>
<dbReference type="Proteomes" id="UP000002513">
    <property type="component" value="Chromosome"/>
</dbReference>
<dbReference type="GO" id="GO:0005886">
    <property type="term" value="C:plasma membrane"/>
    <property type="evidence" value="ECO:0007669"/>
    <property type="project" value="UniProtKB-SubCell"/>
</dbReference>
<dbReference type="Gene3D" id="1.20.1530.20">
    <property type="match status" value="1"/>
</dbReference>
<dbReference type="InterPro" id="IPR038770">
    <property type="entry name" value="Na+/solute_symporter_sf"/>
</dbReference>
<dbReference type="InterPro" id="IPR018383">
    <property type="entry name" value="UPF0324_pro"/>
</dbReference>
<dbReference type="PANTHER" id="PTHR30106">
    <property type="entry name" value="INNER MEMBRANE PROTEIN YEIH-RELATED"/>
    <property type="match status" value="1"/>
</dbReference>
<dbReference type="PANTHER" id="PTHR30106:SF2">
    <property type="entry name" value="UPF0324 INNER MEMBRANE PROTEIN YEIH"/>
    <property type="match status" value="1"/>
</dbReference>
<dbReference type="Pfam" id="PF03601">
    <property type="entry name" value="Cons_hypoth698"/>
    <property type="match status" value="1"/>
</dbReference>
<gene>
    <name type="ordered locus">lin2251</name>
</gene>
<accession>Q929M4</accession>
<sequence>MSQILFKTKTFWYGIALTFCIATLSYFLAKLPFLMILGQLVTAILIGIIIRALFPVPEKWFTGIQFSNKVILRAGIILLGFRLNLVDIYHAGWRVFLIAALCLSFGITIVYFLAKLFGVDKKLAILVACGTGICGAAAVVAISPQVKADNNQTAVAATIIALLGTIFTVIYTLIYPILPLGPDGYGIFAGATLHEIAHVIAAADPGGSSAVDMAVIVKLTRVALLVPVCFVVAKMVNAGTKNRFSWAELPVPWFIFGFLATSAINSFGIIPTSVTDFLVICAYFLIAMSMGGLGLNVHLPSFGKMGGKPFAAALIGSVFLSAFGLALVLLFHLAG</sequence>